<gene>
    <name type="primary">dga1</name>
    <name type="ORF">SPCC1235.15</name>
    <name type="ORF">SPCC548.01</name>
</gene>
<protein>
    <recommendedName>
        <fullName>Diacylglycerol O-acyltransferase 1</fullName>
        <ecNumber>2.3.1.20</ecNumber>
    </recommendedName>
    <alternativeName>
        <fullName>Diglyceride acyltransferase</fullName>
    </alternativeName>
    <alternativeName>
        <fullName>Triacylglycerol synthase</fullName>
        <shortName>TAG synthase</shortName>
    </alternativeName>
</protein>
<organism>
    <name type="scientific">Schizosaccharomyces pombe (strain 972 / ATCC 24843)</name>
    <name type="common">Fission yeast</name>
    <dbReference type="NCBI Taxonomy" id="284812"/>
    <lineage>
        <taxon>Eukaryota</taxon>
        <taxon>Fungi</taxon>
        <taxon>Dikarya</taxon>
        <taxon>Ascomycota</taxon>
        <taxon>Taphrinomycotina</taxon>
        <taxon>Schizosaccharomycetes</taxon>
        <taxon>Schizosaccharomycetales</taxon>
        <taxon>Schizosaccharomycetaceae</taxon>
        <taxon>Schizosaccharomyces</taxon>
    </lineage>
</organism>
<dbReference type="EC" id="2.3.1.20"/>
<dbReference type="EMBL" id="CU329672">
    <property type="protein sequence ID" value="CAE54965.2"/>
    <property type="molecule type" value="Genomic_DNA"/>
</dbReference>
<dbReference type="RefSeq" id="XP_001713160.1">
    <property type="nucleotide sequence ID" value="XM_001713108.2"/>
</dbReference>
<dbReference type="BioGRID" id="857840">
    <property type="interactions" value="17"/>
</dbReference>
<dbReference type="FunCoup" id="O74850">
    <property type="interactions" value="108"/>
</dbReference>
<dbReference type="STRING" id="284812.O74850"/>
<dbReference type="PaxDb" id="4896-SPCC1235.15.1"/>
<dbReference type="EnsemblFungi" id="SPCC1235.15.1">
    <property type="protein sequence ID" value="SPCC1235.15.1:pep"/>
    <property type="gene ID" value="SPCC1235.15"/>
</dbReference>
<dbReference type="PomBase" id="SPCC1235.15">
    <property type="gene designation" value="dga1"/>
</dbReference>
<dbReference type="VEuPathDB" id="FungiDB:SPCC1235.15"/>
<dbReference type="eggNOG" id="KOG0831">
    <property type="taxonomic scope" value="Eukaryota"/>
</dbReference>
<dbReference type="HOGENOM" id="CLU_023995_4_0_1"/>
<dbReference type="InParanoid" id="O74850"/>
<dbReference type="OMA" id="IMGVACT"/>
<dbReference type="PhylomeDB" id="O74850"/>
<dbReference type="Reactome" id="R-SPO-1482883">
    <property type="pathway name" value="Acyl chain remodeling of DAG and TAG"/>
</dbReference>
<dbReference type="Reactome" id="R-SPO-2142753">
    <property type="pathway name" value="Arachidonate metabolism"/>
</dbReference>
<dbReference type="Reactome" id="R-SPO-75109">
    <property type="pathway name" value="Triglyceride biosynthesis"/>
</dbReference>
<dbReference type="Reactome" id="R-SPO-9640463">
    <property type="pathway name" value="Wax biosynthesis"/>
</dbReference>
<dbReference type="UniPathway" id="UPA00282"/>
<dbReference type="PRO" id="PR:O74850"/>
<dbReference type="Proteomes" id="UP000002485">
    <property type="component" value="Chromosome III"/>
</dbReference>
<dbReference type="GO" id="GO:0032541">
    <property type="term" value="C:cortical endoplasmic reticulum"/>
    <property type="evidence" value="ECO:0000314"/>
    <property type="project" value="PomBase"/>
</dbReference>
<dbReference type="GO" id="GO:0005737">
    <property type="term" value="C:cytoplasm"/>
    <property type="evidence" value="ECO:0007005"/>
    <property type="project" value="PomBase"/>
</dbReference>
<dbReference type="GO" id="GO:0005783">
    <property type="term" value="C:endoplasmic reticulum"/>
    <property type="evidence" value="ECO:0007005"/>
    <property type="project" value="PomBase"/>
</dbReference>
<dbReference type="GO" id="GO:0005789">
    <property type="term" value="C:endoplasmic reticulum membrane"/>
    <property type="evidence" value="ECO:0000318"/>
    <property type="project" value="GO_Central"/>
</dbReference>
<dbReference type="GO" id="GO:0005811">
    <property type="term" value="C:lipid droplet"/>
    <property type="evidence" value="ECO:0000314"/>
    <property type="project" value="PomBase"/>
</dbReference>
<dbReference type="GO" id="GO:0097038">
    <property type="term" value="C:perinuclear endoplasmic reticulum"/>
    <property type="evidence" value="ECO:0000314"/>
    <property type="project" value="PomBase"/>
</dbReference>
<dbReference type="GO" id="GO:0003846">
    <property type="term" value="F:2-acylglycerol O-acyltransferase activity"/>
    <property type="evidence" value="ECO:0007669"/>
    <property type="project" value="RHEA"/>
</dbReference>
<dbReference type="GO" id="GO:0004144">
    <property type="term" value="F:diacylglycerol O-acyltransferase activity"/>
    <property type="evidence" value="ECO:0000315"/>
    <property type="project" value="PomBase"/>
</dbReference>
<dbReference type="GO" id="GO:0046339">
    <property type="term" value="P:diacylglycerol metabolic process"/>
    <property type="evidence" value="ECO:0000305"/>
    <property type="project" value="PomBase"/>
</dbReference>
<dbReference type="GO" id="GO:0006071">
    <property type="term" value="P:glycerol metabolic process"/>
    <property type="evidence" value="ECO:0007669"/>
    <property type="project" value="UniProtKB-KW"/>
</dbReference>
<dbReference type="GO" id="GO:0140042">
    <property type="term" value="P:lipid droplet formation"/>
    <property type="evidence" value="ECO:0000315"/>
    <property type="project" value="PomBase"/>
</dbReference>
<dbReference type="GO" id="GO:0019915">
    <property type="term" value="P:lipid storage"/>
    <property type="evidence" value="ECO:0000269"/>
    <property type="project" value="PomBase"/>
</dbReference>
<dbReference type="GO" id="GO:0019432">
    <property type="term" value="P:triglyceride biosynthetic process"/>
    <property type="evidence" value="ECO:0000315"/>
    <property type="project" value="PomBase"/>
</dbReference>
<dbReference type="CDD" id="cd07987">
    <property type="entry name" value="LPLAT_MGAT-like"/>
    <property type="match status" value="1"/>
</dbReference>
<dbReference type="InterPro" id="IPR007130">
    <property type="entry name" value="DAGAT"/>
</dbReference>
<dbReference type="PANTHER" id="PTHR12317:SF0">
    <property type="entry name" value="ACYLTRANSFERASE"/>
    <property type="match status" value="1"/>
</dbReference>
<dbReference type="PANTHER" id="PTHR12317">
    <property type="entry name" value="DIACYLGLYCEROL O-ACYLTRANSFERASE"/>
    <property type="match status" value="1"/>
</dbReference>
<dbReference type="Pfam" id="PF03982">
    <property type="entry name" value="DAGAT"/>
    <property type="match status" value="1"/>
</dbReference>
<proteinExistence type="evidence at protein level"/>
<keyword id="KW-0012">Acyltransferase</keyword>
<keyword id="KW-0256">Endoplasmic reticulum</keyword>
<keyword id="KW-0319">Glycerol metabolism</keyword>
<keyword id="KW-0444">Lipid biosynthesis</keyword>
<keyword id="KW-0551">Lipid droplet</keyword>
<keyword id="KW-0443">Lipid metabolism</keyword>
<keyword id="KW-0472">Membrane</keyword>
<keyword id="KW-1185">Reference proteome</keyword>
<keyword id="KW-0808">Transferase</keyword>
<keyword id="KW-0812">Transmembrane</keyword>
<keyword id="KW-1133">Transmembrane helix</keyword>
<evidence type="ECO:0000250" key="1"/>
<evidence type="ECO:0000250" key="2">
    <source>
        <dbReference type="UniProtKB" id="Q08650"/>
    </source>
</evidence>
<evidence type="ECO:0000255" key="3"/>
<evidence type="ECO:0000269" key="4">
    <source>
    </source>
</evidence>
<evidence type="ECO:0000269" key="5">
    <source>
    </source>
</evidence>
<evidence type="ECO:0000269" key="6">
    <source>
    </source>
</evidence>
<evidence type="ECO:0000269" key="7">
    <source>
    </source>
</evidence>
<evidence type="ECO:0000305" key="8"/>
<evidence type="ECO:0000305" key="9">
    <source>
    </source>
</evidence>
<comment type="function">
    <text evidence="4 6 7">Catalyzes the terminal and only committed step in triacylglycerol (TAG) synthesis by using diacylglycerol (DAG) and fatty acyl-CoA as substrates. Required for storage lipid synthesis (PubMed:12963726, PubMed:26990381). Major DAG esterifying enzyme in stationary phase when TAG production is particularly active (PubMed:12963726). Involved in lipid particle synthesis from the endoplasmic reticulum, promoting localized TAG production at discrete ER subdomains (PubMed:26990381, PubMed:28011631).</text>
</comment>
<comment type="catalytic activity">
    <reaction evidence="4">
        <text>an acyl-CoA + a 1,2-diacyl-sn-glycerol = a triacyl-sn-glycerol + CoA</text>
        <dbReference type="Rhea" id="RHEA:10868"/>
        <dbReference type="ChEBI" id="CHEBI:17815"/>
        <dbReference type="ChEBI" id="CHEBI:57287"/>
        <dbReference type="ChEBI" id="CHEBI:58342"/>
        <dbReference type="ChEBI" id="CHEBI:64615"/>
        <dbReference type="EC" id="2.3.1.20"/>
    </reaction>
</comment>
<comment type="catalytic activity">
    <reaction evidence="4">
        <text>a 2-acylglycerol + an acyl-CoA = a 1,2-diacyl-sn-glycerol + CoA</text>
        <dbReference type="Rhea" id="RHEA:32947"/>
        <dbReference type="ChEBI" id="CHEBI:17389"/>
        <dbReference type="ChEBI" id="CHEBI:17815"/>
        <dbReference type="ChEBI" id="CHEBI:57287"/>
        <dbReference type="ChEBI" id="CHEBI:58342"/>
    </reaction>
</comment>
<comment type="pathway">
    <text evidence="9">Glycerolipid metabolism; triacylglycerol biosynthesis.</text>
</comment>
<comment type="subcellular location">
    <subcellularLocation>
        <location evidence="2">Lipid droplet</location>
    </subcellularLocation>
    <subcellularLocation>
        <location evidence="4 5">Endoplasmic reticulum membrane</location>
        <topology evidence="3">Multi-pass membrane protein</topology>
    </subcellularLocation>
    <text evidence="2">Localizes to sites of lipid droplet biogenesis in the endoplasmic reticulum.</text>
</comment>
<comment type="disruption phenotype">
    <text evidence="6 7">Has reduced whole-cell and lipid droplet (LD) TAG levels. Cells lacking both TAG synthase genes (plh1 and dga1) have no LDs and exhibit defects in spore germination and in spore wall integrity.</text>
</comment>
<comment type="similarity">
    <text evidence="8">Belongs to the diacylglycerol acyltransferase family.</text>
</comment>
<accession>O74850</accession>
<accession>Q9P3V1</accession>
<reference key="1">
    <citation type="journal article" date="2002" name="Nature">
        <title>The genome sequence of Schizosaccharomyces pombe.</title>
        <authorList>
            <person name="Wood V."/>
            <person name="Gwilliam R."/>
            <person name="Rajandream M.A."/>
            <person name="Lyne M.H."/>
            <person name="Lyne R."/>
            <person name="Stewart A."/>
            <person name="Sgouros J.G."/>
            <person name="Peat N."/>
            <person name="Hayles J."/>
            <person name="Baker S.G."/>
            <person name="Basham D."/>
            <person name="Bowman S."/>
            <person name="Brooks K."/>
            <person name="Brown D."/>
            <person name="Brown S."/>
            <person name="Chillingworth T."/>
            <person name="Churcher C.M."/>
            <person name="Collins M."/>
            <person name="Connor R."/>
            <person name="Cronin A."/>
            <person name="Davis P."/>
            <person name="Feltwell T."/>
            <person name="Fraser A."/>
            <person name="Gentles S."/>
            <person name="Goble A."/>
            <person name="Hamlin N."/>
            <person name="Harris D.E."/>
            <person name="Hidalgo J."/>
            <person name="Hodgson G."/>
            <person name="Holroyd S."/>
            <person name="Hornsby T."/>
            <person name="Howarth S."/>
            <person name="Huckle E.J."/>
            <person name="Hunt S."/>
            <person name="Jagels K."/>
            <person name="James K.D."/>
            <person name="Jones L."/>
            <person name="Jones M."/>
            <person name="Leather S."/>
            <person name="McDonald S."/>
            <person name="McLean J."/>
            <person name="Mooney P."/>
            <person name="Moule S."/>
            <person name="Mungall K.L."/>
            <person name="Murphy L.D."/>
            <person name="Niblett D."/>
            <person name="Odell C."/>
            <person name="Oliver K."/>
            <person name="O'Neil S."/>
            <person name="Pearson D."/>
            <person name="Quail M.A."/>
            <person name="Rabbinowitsch E."/>
            <person name="Rutherford K.M."/>
            <person name="Rutter S."/>
            <person name="Saunders D."/>
            <person name="Seeger K."/>
            <person name="Sharp S."/>
            <person name="Skelton J."/>
            <person name="Simmonds M.N."/>
            <person name="Squares R."/>
            <person name="Squares S."/>
            <person name="Stevens K."/>
            <person name="Taylor K."/>
            <person name="Taylor R.G."/>
            <person name="Tivey A."/>
            <person name="Walsh S.V."/>
            <person name="Warren T."/>
            <person name="Whitehead S."/>
            <person name="Woodward J.R."/>
            <person name="Volckaert G."/>
            <person name="Aert R."/>
            <person name="Robben J."/>
            <person name="Grymonprez B."/>
            <person name="Weltjens I."/>
            <person name="Vanstreels E."/>
            <person name="Rieger M."/>
            <person name="Schaefer M."/>
            <person name="Mueller-Auer S."/>
            <person name="Gabel C."/>
            <person name="Fuchs M."/>
            <person name="Duesterhoeft A."/>
            <person name="Fritzc C."/>
            <person name="Holzer E."/>
            <person name="Moestl D."/>
            <person name="Hilbert H."/>
            <person name="Borzym K."/>
            <person name="Langer I."/>
            <person name="Beck A."/>
            <person name="Lehrach H."/>
            <person name="Reinhardt R."/>
            <person name="Pohl T.M."/>
            <person name="Eger P."/>
            <person name="Zimmermann W."/>
            <person name="Wedler H."/>
            <person name="Wambutt R."/>
            <person name="Purnelle B."/>
            <person name="Goffeau A."/>
            <person name="Cadieu E."/>
            <person name="Dreano S."/>
            <person name="Gloux S."/>
            <person name="Lelaure V."/>
            <person name="Mottier S."/>
            <person name="Galibert F."/>
            <person name="Aves S.J."/>
            <person name="Xiang Z."/>
            <person name="Hunt C."/>
            <person name="Moore K."/>
            <person name="Hurst S.M."/>
            <person name="Lucas M."/>
            <person name="Rochet M."/>
            <person name="Gaillardin C."/>
            <person name="Tallada V.A."/>
            <person name="Garzon A."/>
            <person name="Thode G."/>
            <person name="Daga R.R."/>
            <person name="Cruzado L."/>
            <person name="Jimenez J."/>
            <person name="Sanchez M."/>
            <person name="del Rey F."/>
            <person name="Benito J."/>
            <person name="Dominguez A."/>
            <person name="Revuelta J.L."/>
            <person name="Moreno S."/>
            <person name="Armstrong J."/>
            <person name="Forsburg S.L."/>
            <person name="Cerutti L."/>
            <person name="Lowe T."/>
            <person name="McCombie W.R."/>
            <person name="Paulsen I."/>
            <person name="Potashkin J."/>
            <person name="Shpakovski G.V."/>
            <person name="Ussery D."/>
            <person name="Barrell B.G."/>
            <person name="Nurse P."/>
        </authorList>
    </citation>
    <scope>NUCLEOTIDE SEQUENCE [LARGE SCALE GENOMIC DNA]</scope>
    <source>
        <strain>972 / ATCC 24843</strain>
    </source>
</reference>
<reference key="2">
    <citation type="journal article" date="2003" name="J. Biol. Chem.">
        <title>Schizosaccharomyces pombe cells deficient in triacylglycerols synthesis undergo apoptosis upon entry into the stationary phase.</title>
        <authorList>
            <person name="Zhang Q."/>
            <person name="Chieu H.K."/>
            <person name="Low C.P."/>
            <person name="Zhang S."/>
            <person name="Heng C.K."/>
            <person name="Yang H."/>
        </authorList>
    </citation>
    <scope>FUNCTION</scope>
    <scope>CATALYTIC ACTIVITY</scope>
    <scope>SUBCELLULAR LOCATION</scope>
</reference>
<reference key="3">
    <citation type="journal article" date="2006" name="Nat. Biotechnol.">
        <title>ORFeome cloning and global analysis of protein localization in the fission yeast Schizosaccharomyces pombe.</title>
        <authorList>
            <person name="Matsuyama A."/>
            <person name="Arai R."/>
            <person name="Yashiroda Y."/>
            <person name="Shirai A."/>
            <person name="Kamata A."/>
            <person name="Sekido S."/>
            <person name="Kobayashi Y."/>
            <person name="Hashimoto A."/>
            <person name="Hamamoto M."/>
            <person name="Hiraoka Y."/>
            <person name="Horinouchi S."/>
            <person name="Yoshida M."/>
        </authorList>
    </citation>
    <scope>SUBCELLULAR LOCATION [LARGE SCALE ANALYSIS]</scope>
</reference>
<reference key="4">
    <citation type="journal article" date="2016" name="Traffic">
        <title>Lipid droplets form from distinct regions of the cell in the fission yeast Schizosaccharomyces pombe.</title>
        <authorList>
            <person name="Meyers A."/>
            <person name="Del Rio Z.P."/>
            <person name="Beaver R.A."/>
            <person name="Morris R.M."/>
            <person name="Weiskittel T.M."/>
            <person name="Alshibli A.K."/>
            <person name="Mannik J."/>
            <person name="Morrell-Falvey J."/>
            <person name="Dalhaimer P."/>
        </authorList>
    </citation>
    <scope>FUNCTION</scope>
    <scope>DISRUPTION PHENOTYPE</scope>
</reference>
<reference key="5">
    <citation type="journal article" date="2017" name="Biol. Open">
        <title>Lipid droplet dynamics during Schizosaccharomyces pombe sporulation and their role in spore survival.</title>
        <authorList>
            <person name="Yang H.J."/>
            <person name="Osakada H."/>
            <person name="Kojidani T."/>
            <person name="Haraguchi T."/>
            <person name="Hiraoka Y."/>
        </authorList>
    </citation>
    <scope>FUNCTION</scope>
    <scope>DISRUPTION PHENOTYPE</scope>
</reference>
<sequence>MSEETSIPGIIASTPPISKDSRRNVSHWLQALAVFLHSVSLTLTASWYTVLWAFLPFWPFLIVYLIWLIYDDGFVTGKDRQKRWLRNAPPYRWFCHYFPIRLHKTTELDSEKNYIFGYHPHGIISLGAFGGFASEGADFSKLFPGINVSVLTLNSNFYVPVYRDYLMALNINSVSKKSCVSILSRKPGDSVLIVIGGAQESLLSRPGQNNLVLKKRFGFVKLAFLTGSSLVPCFAFGESDIFEQVDNNPRTRIYKFQEIVKKIAGFTVPFFYGRGLLNKTFGLMPWRKPINIVVGEPIDVPKKSHPTNQEIYEVHEEYIRRLEGLWNKYKDVFLPNRISELKLSA</sequence>
<feature type="chain" id="PRO_0000176219" description="Diacylglycerol O-acyltransferase 1">
    <location>
        <begin position="1"/>
        <end position="345"/>
    </location>
</feature>
<feature type="topological domain" description="Cytoplasmic" evidence="1">
    <location>
        <begin position="1"/>
        <end position="49"/>
    </location>
</feature>
<feature type="transmembrane region" description="Helical" evidence="3">
    <location>
        <begin position="50"/>
        <end position="70"/>
    </location>
</feature>
<feature type="topological domain" description="Lumenal" evidence="1">
    <location>
        <begin position="71"/>
        <end position="113"/>
    </location>
</feature>
<feature type="transmembrane region" description="Helical" evidence="3">
    <location>
        <begin position="114"/>
        <end position="134"/>
    </location>
</feature>
<feature type="topological domain" description="Cytoplasmic" evidence="1">
    <location>
        <begin position="135"/>
        <end position="141"/>
    </location>
</feature>
<feature type="transmembrane region" description="Helical" evidence="3">
    <location>
        <begin position="142"/>
        <end position="162"/>
    </location>
</feature>
<feature type="topological domain" description="Lumenal" evidence="1">
    <location>
        <begin position="163"/>
        <end position="216"/>
    </location>
</feature>
<feature type="transmembrane region" description="Helical" evidence="3">
    <location>
        <begin position="217"/>
        <end position="237"/>
    </location>
</feature>
<feature type="topological domain" description="Cytoplasmic" evidence="1">
    <location>
        <begin position="238"/>
        <end position="345"/>
    </location>
</feature>
<name>DGAT2_SCHPO</name>